<feature type="signal peptide" evidence="1 2">
    <location>
        <begin position="1"/>
        <end position="19"/>
    </location>
</feature>
<feature type="chain" id="PRO_0000022648" description="Venom allergen 4">
    <location>
        <begin position="20"/>
        <end position="137"/>
    </location>
</feature>
<feature type="sequence variant">
    <original>R</original>
    <variation>H</variation>
    <location>
        <position position="42"/>
    </location>
</feature>
<feature type="sequence variant" description="In Sol i 4.02.">
    <original>R</original>
    <variation>K</variation>
    <location>
        <position position="51"/>
    </location>
</feature>
<feature type="sequence variant">
    <original>W</original>
    <variation>I</variation>
    <location>
        <position position="56"/>
    </location>
</feature>
<feature type="sequence variant" description="In Sol i 4.02.">
    <original>W</original>
    <variation>L</variation>
    <location>
        <position position="56"/>
    </location>
</feature>
<feature type="sequence variant" description="In Sol i 4.02.">
    <original>A</original>
    <variation>I</variation>
    <location>
        <position position="84"/>
    </location>
</feature>
<feature type="sequence variant">
    <original>I</original>
    <variation>V</variation>
    <location>
        <position position="111"/>
    </location>
</feature>
<feature type="sequence conflict" description="In Ref. 2; AA sequence." evidence="3" ref="2">
    <original>KK</original>
    <variation>N</variation>
    <location>
        <begin position="136"/>
        <end position="137"/>
    </location>
</feature>
<sequence length="137" mass="15728">MKTFVLVSCLLVFTQIIYALDIKEISIMNRILEKCIRTVPKRENDPINPLRNVNVWYCAFTKRGIFTPKGVNTKQYINYCEKTAISPADIKLCKKIASKCVKKVYDRPGPIIERSKNLLSCVLKKGLLELTVYGKKK</sequence>
<name>VA4_SOLIN</name>
<accession>P35777</accession>
<accession>Q9UB98</accession>
<accession>Q9UB99</accession>
<comment type="subunit">
    <text>Monomer.</text>
</comment>
<comment type="subcellular location">
    <subcellularLocation>
        <location>Secreted</location>
    </subcellularLocation>
</comment>
<comment type="tissue specificity">
    <text>Expressed by the venom gland.</text>
</comment>
<comment type="allergen">
    <text>Causes an allergic reaction in human. The most common cause of insect venom allergy in the southeastern United States is the imported fire ant.</text>
</comment>
<comment type="similarity">
    <text evidence="3">Belongs to the ant venom allergen 2/4 family.</text>
</comment>
<reference key="1">
    <citation type="submission" date="1998-11" db="EMBL/GenBank/DDBJ databases">
        <authorList>
            <person name="Schmidt M."/>
            <person name="Gridley B."/>
            <person name="Sakell R.H."/>
            <person name="Hoffman D.R."/>
        </authorList>
    </citation>
    <scope>NUCLEOTIDE SEQUENCE [MRNA]</scope>
</reference>
<reference key="2">
    <citation type="journal article" date="1993" name="J. Allergy Clin. Immunol.">
        <title>Allergens in Hymenoptera venom XXIV: the amino acid sequences of imported fire ant venom allergens Sol i II, Sol i III, and Sol i IV.</title>
        <authorList>
            <person name="Hoffman D.R."/>
        </authorList>
    </citation>
    <scope>PROTEIN SEQUENCE OF 20-137</scope>
    <source>
        <tissue>Venom</tissue>
    </source>
</reference>
<reference key="3">
    <citation type="journal article" date="1990" name="J. Allergy Clin. Immunol.">
        <title>Allergens in Hymenoptera venom. XXII. Comparison of venoms from two species of imported fire ants, Solenopsis invicta and richteri.</title>
        <authorList>
            <person name="Hoffman D.R."/>
            <person name="Smith A.M."/>
            <person name="Schmidt M."/>
            <person name="Moffitt J.E."/>
            <person name="Guralnick M."/>
        </authorList>
    </citation>
    <scope>PROTEIN SEQUENCE OF 20-50</scope>
    <source>
        <tissue>Venom</tissue>
    </source>
</reference>
<dbReference type="EMBL" id="AF103805">
    <property type="protein sequence ID" value="AAC97369.1"/>
    <property type="molecule type" value="mRNA"/>
</dbReference>
<dbReference type="EMBL" id="AF103806">
    <property type="protein sequence ID" value="AAC97370.1"/>
    <property type="molecule type" value="mRNA"/>
</dbReference>
<dbReference type="PIR" id="B44582">
    <property type="entry name" value="C37330"/>
</dbReference>
<dbReference type="RefSeq" id="XP_039310460.1">
    <property type="nucleotide sequence ID" value="XM_039454526.1"/>
</dbReference>
<dbReference type="SMR" id="P35777"/>
<dbReference type="Allergome" id="3484">
    <property type="allergen name" value="Sol i 4.0101"/>
</dbReference>
<dbReference type="Allergome" id="633">
    <property type="allergen name" value="Sol i 4"/>
</dbReference>
<dbReference type="EnsemblMetazoa" id="XM_039454526.1">
    <property type="protein sequence ID" value="XP_039310460.1"/>
    <property type="gene ID" value="LOC113002676"/>
</dbReference>
<dbReference type="GeneID" id="113002676"/>
<dbReference type="GO" id="GO:0005576">
    <property type="term" value="C:extracellular region"/>
    <property type="evidence" value="ECO:0007669"/>
    <property type="project" value="UniProtKB-SubCell"/>
</dbReference>
<dbReference type="Gene3D" id="1.10.238.190">
    <property type="match status" value="1"/>
</dbReference>
<dbReference type="InterPro" id="IPR038211">
    <property type="entry name" value="Ant_venon_allerg_soli_2/4_sf"/>
</dbReference>
<dbReference type="InterPro" id="IPR055216">
    <property type="entry name" value="Sol_i_2/4"/>
</dbReference>
<dbReference type="Pfam" id="PF22750">
    <property type="entry name" value="Sol_i_2"/>
    <property type="match status" value="1"/>
</dbReference>
<evidence type="ECO:0000269" key="1">
    <source>
    </source>
</evidence>
<evidence type="ECO:0000269" key="2">
    <source>
    </source>
</evidence>
<evidence type="ECO:0000305" key="3"/>
<protein>
    <recommendedName>
        <fullName>Venom allergen 4</fullName>
    </recommendedName>
    <alternativeName>
        <fullName>Allergen Sol i IV</fullName>
    </alternativeName>
    <alternativeName>
        <fullName>Venom allergen IV</fullName>
    </alternativeName>
    <allergenName>Sol i 4</allergenName>
</protein>
<keyword id="KW-0020">Allergen</keyword>
<keyword id="KW-0903">Direct protein sequencing</keyword>
<keyword id="KW-0964">Secreted</keyword>
<keyword id="KW-0732">Signal</keyword>
<organism>
    <name type="scientific">Solenopsis invicta</name>
    <name type="common">Red imported fire ant</name>
    <name type="synonym">Solenopsis wagneri</name>
    <dbReference type="NCBI Taxonomy" id="13686"/>
    <lineage>
        <taxon>Eukaryota</taxon>
        <taxon>Metazoa</taxon>
        <taxon>Ecdysozoa</taxon>
        <taxon>Arthropoda</taxon>
        <taxon>Hexapoda</taxon>
        <taxon>Insecta</taxon>
        <taxon>Pterygota</taxon>
        <taxon>Neoptera</taxon>
        <taxon>Endopterygota</taxon>
        <taxon>Hymenoptera</taxon>
        <taxon>Apocrita</taxon>
        <taxon>Aculeata</taxon>
        <taxon>Formicoidea</taxon>
        <taxon>Formicidae</taxon>
        <taxon>Myrmicinae</taxon>
        <taxon>Solenopsis</taxon>
    </lineage>
</organism>
<proteinExistence type="evidence at protein level"/>